<keyword id="KW-1003">Cell membrane</keyword>
<keyword id="KW-0472">Membrane</keyword>
<keyword id="KW-1185">Reference proteome</keyword>
<keyword id="KW-0812">Transmembrane</keyword>
<keyword id="KW-1133">Transmembrane helix</keyword>
<dbReference type="EMBL" id="L77117">
    <property type="protein sequence ID" value="AAB99139.1"/>
    <property type="molecule type" value="Genomic_DNA"/>
</dbReference>
<dbReference type="PIR" id="H64441">
    <property type="entry name" value="H64441"/>
</dbReference>
<dbReference type="RefSeq" id="WP_010870648.1">
    <property type="nucleotide sequence ID" value="NC_000909.1"/>
</dbReference>
<dbReference type="STRING" id="243232.MJ_1137"/>
<dbReference type="PaxDb" id="243232-MJ_1137"/>
<dbReference type="EnsemblBacteria" id="AAB99139">
    <property type="protein sequence ID" value="AAB99139"/>
    <property type="gene ID" value="MJ_1137"/>
</dbReference>
<dbReference type="GeneID" id="1452033"/>
<dbReference type="KEGG" id="mja:MJ_1137"/>
<dbReference type="eggNOG" id="arCOG01880">
    <property type="taxonomic scope" value="Archaea"/>
</dbReference>
<dbReference type="HOGENOM" id="CLU_031477_4_2_2"/>
<dbReference type="InParanoid" id="Q58537"/>
<dbReference type="OrthoDB" id="107330at2157"/>
<dbReference type="PhylomeDB" id="Q58537"/>
<dbReference type="Proteomes" id="UP000000805">
    <property type="component" value="Chromosome"/>
</dbReference>
<dbReference type="GO" id="GO:0005886">
    <property type="term" value="C:plasma membrane"/>
    <property type="evidence" value="ECO:0007669"/>
    <property type="project" value="UniProtKB-SubCell"/>
</dbReference>
<dbReference type="GO" id="GO:0004143">
    <property type="term" value="F:ATP-dependent diacylglycerol kinase activity"/>
    <property type="evidence" value="ECO:0007669"/>
    <property type="project" value="InterPro"/>
</dbReference>
<dbReference type="InterPro" id="IPR037997">
    <property type="entry name" value="Dgk1-like"/>
</dbReference>
<dbReference type="PANTHER" id="PTHR31303">
    <property type="entry name" value="CTP-DEPENDENT DIACYLGLYCEROL KINASE 1"/>
    <property type="match status" value="1"/>
</dbReference>
<dbReference type="PANTHER" id="PTHR31303:SF1">
    <property type="entry name" value="CTP-DEPENDENT DIACYLGLYCEROL KINASE 1"/>
    <property type="match status" value="1"/>
</dbReference>
<accession>Q58537</accession>
<name>Y1137_METJA</name>
<organism>
    <name type="scientific">Methanocaldococcus jannaschii (strain ATCC 43067 / DSM 2661 / JAL-1 / JCM 10045 / NBRC 100440)</name>
    <name type="common">Methanococcus jannaschii</name>
    <dbReference type="NCBI Taxonomy" id="243232"/>
    <lineage>
        <taxon>Archaea</taxon>
        <taxon>Methanobacteriati</taxon>
        <taxon>Methanobacteriota</taxon>
        <taxon>Methanomada group</taxon>
        <taxon>Methanococci</taxon>
        <taxon>Methanococcales</taxon>
        <taxon>Methanocaldococcaceae</taxon>
        <taxon>Methanocaldococcus</taxon>
    </lineage>
</organism>
<feature type="chain" id="PRO_0000107184" description="Uncharacterized protein MJ1137">
    <location>
        <begin position="1"/>
        <end position="191"/>
    </location>
</feature>
<feature type="transmembrane region" description="Helical" evidence="1">
    <location>
        <begin position="4"/>
        <end position="24"/>
    </location>
</feature>
<feature type="transmembrane region" description="Helical" evidence="1">
    <location>
        <begin position="26"/>
        <end position="46"/>
    </location>
</feature>
<feature type="transmembrane region" description="Helical" evidence="1">
    <location>
        <begin position="68"/>
        <end position="88"/>
    </location>
</feature>
<feature type="transmembrane region" description="Helical" evidence="1">
    <location>
        <begin position="90"/>
        <end position="110"/>
    </location>
</feature>
<feature type="transmembrane region" description="Helical" evidence="1">
    <location>
        <begin position="135"/>
        <end position="155"/>
    </location>
</feature>
<feature type="transmembrane region" description="Helical" evidence="1">
    <location>
        <begin position="168"/>
        <end position="188"/>
    </location>
</feature>
<reference key="1">
    <citation type="journal article" date="1996" name="Science">
        <title>Complete genome sequence of the methanogenic archaeon, Methanococcus jannaschii.</title>
        <authorList>
            <person name="Bult C.J."/>
            <person name="White O."/>
            <person name="Olsen G.J."/>
            <person name="Zhou L."/>
            <person name="Fleischmann R.D."/>
            <person name="Sutton G.G."/>
            <person name="Blake J.A."/>
            <person name="FitzGerald L.M."/>
            <person name="Clayton R.A."/>
            <person name="Gocayne J.D."/>
            <person name="Kerlavage A.R."/>
            <person name="Dougherty B.A."/>
            <person name="Tomb J.-F."/>
            <person name="Adams M.D."/>
            <person name="Reich C.I."/>
            <person name="Overbeek R."/>
            <person name="Kirkness E.F."/>
            <person name="Weinstock K.G."/>
            <person name="Merrick J.M."/>
            <person name="Glodek A."/>
            <person name="Scott J.L."/>
            <person name="Geoghagen N.S.M."/>
            <person name="Weidman J.F."/>
            <person name="Fuhrmann J.L."/>
            <person name="Nguyen D."/>
            <person name="Utterback T.R."/>
            <person name="Kelley J.M."/>
            <person name="Peterson J.D."/>
            <person name="Sadow P.W."/>
            <person name="Hanna M.C."/>
            <person name="Cotton M.D."/>
            <person name="Roberts K.M."/>
            <person name="Hurst M.A."/>
            <person name="Kaine B.P."/>
            <person name="Borodovsky M."/>
            <person name="Klenk H.-P."/>
            <person name="Fraser C.M."/>
            <person name="Smith H.O."/>
            <person name="Woese C.R."/>
            <person name="Venter J.C."/>
        </authorList>
    </citation>
    <scope>NUCLEOTIDE SEQUENCE [LARGE SCALE GENOMIC DNA]</scope>
    <source>
        <strain>ATCC 43067 / DSM 2661 / JAL-1 / JCM 10045 / NBRC 100440</strain>
    </source>
</reference>
<gene>
    <name type="ordered locus">MJ1137</name>
</gene>
<comment type="subcellular location">
    <subcellularLocation>
        <location evidence="2">Cell membrane</location>
        <topology evidence="2">Multi-pass membrane protein</topology>
    </subcellularLocation>
</comment>
<evidence type="ECO:0000255" key="1"/>
<evidence type="ECO:0000305" key="2"/>
<protein>
    <recommendedName>
        <fullName>Uncharacterized protein MJ1137</fullName>
    </recommendedName>
</protein>
<sequence>MREIYRQTIHLVFGVLIAFSVLIFKKQLIIPLIVSIVIGICLYFLCKRYYIPIVSDLLNLCKREKEDGKGAIYFAIGMLISLILIDDIKAVFFGILVFAVGDSLATIIGIRGKLKIKYFGKTVEGFLAFFISASLILYPFYGTYGIFVALISAFIEFVSKKIRIDDNLYLPFIVAFIINHQINICSLMNFI</sequence>
<proteinExistence type="predicted"/>